<comment type="similarity">
    <text evidence="1">Belongs to the eukaryotic ribosomal protein eS24 family.</text>
</comment>
<sequence length="112" mass="12130">MEITITSQTENVLLNRKEIGFSITFTGATPSRKMVHAKLAAMLSAPKDQLVIGSLHNRFGLTEITGDARVYTSAEYLKKIEPEYIRKRGMAGEEEGNADAQDAPSGDAAEAS</sequence>
<dbReference type="EMBL" id="CP000254">
    <property type="protein sequence ID" value="ABD42558.1"/>
    <property type="molecule type" value="Genomic_DNA"/>
</dbReference>
<dbReference type="RefSeq" id="WP_011449811.1">
    <property type="nucleotide sequence ID" value="NC_007796.1"/>
</dbReference>
<dbReference type="SMR" id="Q2FS46"/>
<dbReference type="FunCoup" id="Q2FS46">
    <property type="interactions" value="56"/>
</dbReference>
<dbReference type="STRING" id="323259.Mhun_2866"/>
<dbReference type="EnsemblBacteria" id="ABD42558">
    <property type="protein sequence ID" value="ABD42558"/>
    <property type="gene ID" value="Mhun_2866"/>
</dbReference>
<dbReference type="GeneID" id="3923823"/>
<dbReference type="KEGG" id="mhu:Mhun_2866"/>
<dbReference type="eggNOG" id="arCOG04182">
    <property type="taxonomic scope" value="Archaea"/>
</dbReference>
<dbReference type="HOGENOM" id="CLU_107248_3_1_2"/>
<dbReference type="InParanoid" id="Q2FS46"/>
<dbReference type="OrthoDB" id="27533at2157"/>
<dbReference type="Proteomes" id="UP000001941">
    <property type="component" value="Chromosome"/>
</dbReference>
<dbReference type="GO" id="GO:1990904">
    <property type="term" value="C:ribonucleoprotein complex"/>
    <property type="evidence" value="ECO:0007669"/>
    <property type="project" value="UniProtKB-KW"/>
</dbReference>
<dbReference type="GO" id="GO:0005840">
    <property type="term" value="C:ribosome"/>
    <property type="evidence" value="ECO:0007669"/>
    <property type="project" value="UniProtKB-KW"/>
</dbReference>
<dbReference type="GO" id="GO:0003735">
    <property type="term" value="F:structural constituent of ribosome"/>
    <property type="evidence" value="ECO:0007669"/>
    <property type="project" value="InterPro"/>
</dbReference>
<dbReference type="GO" id="GO:0006412">
    <property type="term" value="P:translation"/>
    <property type="evidence" value="ECO:0007669"/>
    <property type="project" value="UniProtKB-UniRule"/>
</dbReference>
<dbReference type="Gene3D" id="3.30.70.330">
    <property type="match status" value="1"/>
</dbReference>
<dbReference type="HAMAP" id="MF_00545">
    <property type="entry name" value="Ribosomal_eS24"/>
    <property type="match status" value="1"/>
</dbReference>
<dbReference type="InterPro" id="IPR012677">
    <property type="entry name" value="Nucleotide-bd_a/b_plait_sf"/>
</dbReference>
<dbReference type="InterPro" id="IPR001976">
    <property type="entry name" value="Ribosomal_eS24"/>
</dbReference>
<dbReference type="InterPro" id="IPR012678">
    <property type="entry name" value="Ribosomal_uL23/eL15/eS24_sf"/>
</dbReference>
<dbReference type="Pfam" id="PF01282">
    <property type="entry name" value="Ribosomal_S24e"/>
    <property type="match status" value="1"/>
</dbReference>
<dbReference type="SUPFAM" id="SSF54189">
    <property type="entry name" value="Ribosomal proteins S24e, L23 and L15e"/>
    <property type="match status" value="1"/>
</dbReference>
<evidence type="ECO:0000255" key="1">
    <source>
        <dbReference type="HAMAP-Rule" id="MF_00545"/>
    </source>
</evidence>
<evidence type="ECO:0000256" key="2">
    <source>
        <dbReference type="SAM" id="MobiDB-lite"/>
    </source>
</evidence>
<evidence type="ECO:0000305" key="3"/>
<accession>Q2FS46</accession>
<name>RS24_METHJ</name>
<reference key="1">
    <citation type="journal article" date="2016" name="Stand. Genomic Sci.">
        <title>Complete genome sequence of Methanospirillum hungatei type strain JF1.</title>
        <authorList>
            <person name="Gunsalus R.P."/>
            <person name="Cook L.E."/>
            <person name="Crable B."/>
            <person name="Rohlin L."/>
            <person name="McDonald E."/>
            <person name="Mouttaki H."/>
            <person name="Sieber J.R."/>
            <person name="Poweleit N."/>
            <person name="Zhou H."/>
            <person name="Lapidus A.L."/>
            <person name="Daligault H.E."/>
            <person name="Land M."/>
            <person name="Gilna P."/>
            <person name="Ivanova N."/>
            <person name="Kyrpides N."/>
            <person name="Culley D.E."/>
            <person name="McInerney M.J."/>
        </authorList>
    </citation>
    <scope>NUCLEOTIDE SEQUENCE [LARGE SCALE GENOMIC DNA]</scope>
    <source>
        <strain>ATCC 27890 / DSM 864 / NBRC 100397 / JF-1</strain>
    </source>
</reference>
<proteinExistence type="inferred from homology"/>
<feature type="chain" id="PRO_1000017741" description="Small ribosomal subunit protein eS24">
    <location>
        <begin position="1"/>
        <end position="112"/>
    </location>
</feature>
<feature type="region of interest" description="Disordered" evidence="2">
    <location>
        <begin position="88"/>
        <end position="112"/>
    </location>
</feature>
<organism>
    <name type="scientific">Methanospirillum hungatei JF-1 (strain ATCC 27890 / DSM 864 / NBRC 100397 / JF-1)</name>
    <dbReference type="NCBI Taxonomy" id="323259"/>
    <lineage>
        <taxon>Archaea</taxon>
        <taxon>Methanobacteriati</taxon>
        <taxon>Methanobacteriota</taxon>
        <taxon>Stenosarchaea group</taxon>
        <taxon>Methanomicrobia</taxon>
        <taxon>Methanomicrobiales</taxon>
        <taxon>Methanospirillaceae</taxon>
        <taxon>Methanospirillum</taxon>
    </lineage>
</organism>
<keyword id="KW-1185">Reference proteome</keyword>
<keyword id="KW-0687">Ribonucleoprotein</keyword>
<keyword id="KW-0689">Ribosomal protein</keyword>
<protein>
    <recommendedName>
        <fullName evidence="1">Small ribosomal subunit protein eS24</fullName>
    </recommendedName>
    <alternativeName>
        <fullName evidence="3">30S ribosomal protein S24e</fullName>
    </alternativeName>
</protein>
<gene>
    <name evidence="1" type="primary">rps24e</name>
    <name type="ordered locus">Mhun_2866</name>
</gene>